<dbReference type="EMBL" id="GAQE01000044">
    <property type="protein sequence ID" value="JAB84510.1"/>
    <property type="molecule type" value="Transcribed_RNA"/>
</dbReference>
<dbReference type="SMR" id="W4VRU3"/>
<dbReference type="ArachnoServer" id="AS001624">
    <property type="toxin name" value="U18-barytoxin-Tl1a"/>
</dbReference>
<dbReference type="GO" id="GO:0005576">
    <property type="term" value="C:extracellular region"/>
    <property type="evidence" value="ECO:0007669"/>
    <property type="project" value="UniProtKB-SubCell"/>
</dbReference>
<dbReference type="GO" id="GO:0099106">
    <property type="term" value="F:ion channel regulator activity"/>
    <property type="evidence" value="ECO:0007669"/>
    <property type="project" value="UniProtKB-KW"/>
</dbReference>
<dbReference type="GO" id="GO:0090729">
    <property type="term" value="F:toxin activity"/>
    <property type="evidence" value="ECO:0007669"/>
    <property type="project" value="UniProtKB-KW"/>
</dbReference>
<dbReference type="InterPro" id="IPR035311">
    <property type="entry name" value="Cys_Knot_tox"/>
</dbReference>
<dbReference type="Pfam" id="PF17486">
    <property type="entry name" value="Cys_Knot_tox"/>
    <property type="match status" value="1"/>
</dbReference>
<sequence length="87" mass="9596">MKPIVYMLLFCAFTVVILGHPNNHGALIPHHDKLPNGESCTRPGYSCSESSQCCTPVDGETFTYGCGRAWMEGSKICYICNRESSMC</sequence>
<evidence type="ECO:0000250" key="1">
    <source>
        <dbReference type="UniProtKB" id="A0A1D0C027"/>
    </source>
</evidence>
<evidence type="ECO:0000255" key="2"/>
<evidence type="ECO:0000303" key="3">
    <source>
    </source>
</evidence>
<evidence type="ECO:0000305" key="4"/>
<evidence type="ECO:0000305" key="5">
    <source>
    </source>
</evidence>
<comment type="function">
    <text evidence="4">Probable neurotoxin with ion channel impairing activity.</text>
</comment>
<comment type="subcellular location">
    <subcellularLocation>
        <location evidence="5">Secreted</location>
    </subcellularLocation>
</comment>
<comment type="tissue specificity">
    <text evidence="5">Expressed by the venom gland.</text>
</comment>
<comment type="domain">
    <text evidence="1">The presence of a 'disulfide through disulfide knot' structurally defines this protein as a knottin.</text>
</comment>
<comment type="similarity">
    <text evidence="4">Belongs to the neurotoxin 27 (Jztx-72) family. ICK-41 subfamily.</text>
</comment>
<feature type="signal peptide" evidence="2">
    <location>
        <begin position="1"/>
        <end position="19"/>
    </location>
</feature>
<feature type="chain" id="PRO_0000429248" description="Toxin ICK-41">
    <location>
        <begin position="20"/>
        <end position="87"/>
    </location>
</feature>
<feature type="disulfide bond" evidence="1">
    <location>
        <begin position="40"/>
        <end position="77"/>
    </location>
</feature>
<feature type="disulfide bond" evidence="1">
    <location>
        <begin position="40"/>
        <end position="54"/>
    </location>
</feature>
<feature type="disulfide bond" evidence="1">
    <location>
        <begin position="53"/>
        <end position="66"/>
    </location>
</feature>
<feature type="disulfide bond" evidence="1">
    <location>
        <begin position="80"/>
        <end position="87"/>
    </location>
</feature>
<keyword id="KW-1015">Disulfide bond</keyword>
<keyword id="KW-0872">Ion channel impairing toxin</keyword>
<keyword id="KW-0960">Knottin</keyword>
<keyword id="KW-0528">Neurotoxin</keyword>
<keyword id="KW-0964">Secreted</keyword>
<keyword id="KW-0732">Signal</keyword>
<keyword id="KW-0800">Toxin</keyword>
<reference key="1">
    <citation type="journal article" date="2013" name="Toxins">
        <title>A proteomics and transcriptomics investigation of the venom from the barychelid spider Trittame loki (brush-foot trapdoor).</title>
        <authorList>
            <person name="Undheim E.A."/>
            <person name="Sunagar K."/>
            <person name="Herzig V."/>
            <person name="Kely L."/>
            <person name="Low D.H."/>
            <person name="Jackson T.N."/>
            <person name="Jones A."/>
            <person name="Kurniawan N."/>
            <person name="King G.F."/>
            <person name="Ali S.A."/>
            <person name="Antunes A."/>
            <person name="Ruder T."/>
            <person name="Fry B.G."/>
        </authorList>
    </citation>
    <scope>NUCLEOTIDE SEQUENCE [MRNA]</scope>
    <source>
        <tissue>Venom gland</tissue>
    </source>
</reference>
<organism>
    <name type="scientific">Trittame loki</name>
    <name type="common">Brush-footed trapdoor spider</name>
    <dbReference type="NCBI Taxonomy" id="1295018"/>
    <lineage>
        <taxon>Eukaryota</taxon>
        <taxon>Metazoa</taxon>
        <taxon>Ecdysozoa</taxon>
        <taxon>Arthropoda</taxon>
        <taxon>Chelicerata</taxon>
        <taxon>Arachnida</taxon>
        <taxon>Araneae</taxon>
        <taxon>Mygalomorphae</taxon>
        <taxon>Barychelidae</taxon>
        <taxon>Trittame</taxon>
    </lineage>
</organism>
<protein>
    <recommendedName>
        <fullName evidence="3">Toxin ICK-41</fullName>
    </recommendedName>
</protein>
<proteinExistence type="inferred from homology"/>
<accession>W4VRU3</accession>
<name>ICK41_TRILK</name>